<protein>
    <recommendedName>
        <fullName>Uncharacterized protein YGL230C</fullName>
    </recommendedName>
</protein>
<keyword id="KW-0472">Membrane</keyword>
<keyword id="KW-1185">Reference proteome</keyword>
<keyword id="KW-0812">Transmembrane</keyword>
<keyword id="KW-1133">Transmembrane helix</keyword>
<reference key="1">
    <citation type="journal article" date="1997" name="Nature">
        <title>The nucleotide sequence of Saccharomyces cerevisiae chromosome VII.</title>
        <authorList>
            <person name="Tettelin H."/>
            <person name="Agostoni-Carbone M.L."/>
            <person name="Albermann K."/>
            <person name="Albers M."/>
            <person name="Arroyo J."/>
            <person name="Backes U."/>
            <person name="Barreiros T."/>
            <person name="Bertani I."/>
            <person name="Bjourson A.J."/>
            <person name="Brueckner M."/>
            <person name="Bruschi C.V."/>
            <person name="Carignani G."/>
            <person name="Castagnoli L."/>
            <person name="Cerdan E."/>
            <person name="Clemente M.L."/>
            <person name="Coblenz A."/>
            <person name="Coglievina M."/>
            <person name="Coissac E."/>
            <person name="Defoor E."/>
            <person name="Del Bino S."/>
            <person name="Delius H."/>
            <person name="Delneri D."/>
            <person name="de Wergifosse P."/>
            <person name="Dujon B."/>
            <person name="Durand P."/>
            <person name="Entian K.-D."/>
            <person name="Eraso P."/>
            <person name="Escribano V."/>
            <person name="Fabiani L."/>
            <person name="Fartmann B."/>
            <person name="Feroli F."/>
            <person name="Feuermann M."/>
            <person name="Frontali L."/>
            <person name="Garcia-Gonzalez M."/>
            <person name="Garcia-Saez M.I."/>
            <person name="Goffeau A."/>
            <person name="Guerreiro P."/>
            <person name="Hani J."/>
            <person name="Hansen M."/>
            <person name="Hebling U."/>
            <person name="Hernandez K."/>
            <person name="Heumann K."/>
            <person name="Hilger F."/>
            <person name="Hofmann B."/>
            <person name="Indge K.J."/>
            <person name="James C.M."/>
            <person name="Klima R."/>
            <person name="Koetter P."/>
            <person name="Kramer B."/>
            <person name="Kramer W."/>
            <person name="Lauquin G."/>
            <person name="Leuther H."/>
            <person name="Louis E.J."/>
            <person name="Maillier E."/>
            <person name="Marconi A."/>
            <person name="Martegani E."/>
            <person name="Mazon M.J."/>
            <person name="Mazzoni C."/>
            <person name="McReynolds A.D.K."/>
            <person name="Melchioretto P."/>
            <person name="Mewes H.-W."/>
            <person name="Minenkova O."/>
            <person name="Mueller-Auer S."/>
            <person name="Nawrocki A."/>
            <person name="Netter P."/>
            <person name="Neu R."/>
            <person name="Nombela C."/>
            <person name="Oliver S.G."/>
            <person name="Panzeri L."/>
            <person name="Paoluzi S."/>
            <person name="Plevani P."/>
            <person name="Portetelle D."/>
            <person name="Portillo F."/>
            <person name="Potier S."/>
            <person name="Purnelle B."/>
            <person name="Rieger M."/>
            <person name="Riles L."/>
            <person name="Rinaldi T."/>
            <person name="Robben J."/>
            <person name="Rodrigues-Pousada C."/>
            <person name="Rodriguez-Belmonte E."/>
            <person name="Rodriguez-Torres A.M."/>
            <person name="Rose M."/>
            <person name="Ruzzi M."/>
            <person name="Saliola M."/>
            <person name="Sanchez-Perez M."/>
            <person name="Schaefer B."/>
            <person name="Schaefer M."/>
            <person name="Scharfe M."/>
            <person name="Schmidheini T."/>
            <person name="Schreer A."/>
            <person name="Skala J."/>
            <person name="Souciet J.-L."/>
            <person name="Steensma H.Y."/>
            <person name="Talla E."/>
            <person name="Thierry A."/>
            <person name="Vandenbol M."/>
            <person name="van der Aart Q.J.M."/>
            <person name="Van Dyck L."/>
            <person name="Vanoni M."/>
            <person name="Verhasselt P."/>
            <person name="Voet M."/>
            <person name="Volckaert G."/>
            <person name="Wambutt R."/>
            <person name="Watson M.D."/>
            <person name="Weber N."/>
            <person name="Wedler E."/>
            <person name="Wedler H."/>
            <person name="Wipfli P."/>
            <person name="Wolf K."/>
            <person name="Wright L.F."/>
            <person name="Zaccaria P."/>
            <person name="Zimmermann M."/>
            <person name="Zollner A."/>
            <person name="Kleine K."/>
        </authorList>
    </citation>
    <scope>NUCLEOTIDE SEQUENCE [LARGE SCALE GENOMIC DNA]</scope>
    <source>
        <strain>ATCC 204508 / S288c</strain>
    </source>
</reference>
<reference key="2">
    <citation type="journal article" date="2014" name="G3 (Bethesda)">
        <title>The reference genome sequence of Saccharomyces cerevisiae: Then and now.</title>
        <authorList>
            <person name="Engel S.R."/>
            <person name="Dietrich F.S."/>
            <person name="Fisk D.G."/>
            <person name="Binkley G."/>
            <person name="Balakrishnan R."/>
            <person name="Costanzo M.C."/>
            <person name="Dwight S.S."/>
            <person name="Hitz B.C."/>
            <person name="Karra K."/>
            <person name="Nash R.S."/>
            <person name="Weng S."/>
            <person name="Wong E.D."/>
            <person name="Lloyd P."/>
            <person name="Skrzypek M.S."/>
            <person name="Miyasato S.R."/>
            <person name="Simison M."/>
            <person name="Cherry J.M."/>
        </authorList>
    </citation>
    <scope>GENOME REANNOTATION</scope>
    <source>
        <strain>ATCC 204508 / S288c</strain>
    </source>
</reference>
<reference key="3">
    <citation type="journal article" date="2007" name="Genome Res.">
        <title>Approaching a complete repository of sequence-verified protein-encoding clones for Saccharomyces cerevisiae.</title>
        <authorList>
            <person name="Hu Y."/>
            <person name="Rolfs A."/>
            <person name="Bhullar B."/>
            <person name="Murthy T.V.S."/>
            <person name="Zhu C."/>
            <person name="Berger M.F."/>
            <person name="Camargo A.A."/>
            <person name="Kelley F."/>
            <person name="McCarron S."/>
            <person name="Jepson D."/>
            <person name="Richardson A."/>
            <person name="Raphael J."/>
            <person name="Moreira D."/>
            <person name="Taycher E."/>
            <person name="Zuo D."/>
            <person name="Mohr S."/>
            <person name="Kane M.F."/>
            <person name="Williamson J."/>
            <person name="Simpson A.J.G."/>
            <person name="Bulyk M.L."/>
            <person name="Harlow E."/>
            <person name="Marsischky G."/>
            <person name="Kolodner R.D."/>
            <person name="LaBaer J."/>
        </authorList>
    </citation>
    <scope>NUCLEOTIDE SEQUENCE [GENOMIC DNA]</scope>
    <source>
        <strain>ATCC 204508 / S288c</strain>
    </source>
</reference>
<accession>P53074</accession>
<accession>D6VVA4</accession>
<name>YGY0_YEAST</name>
<proteinExistence type="predicted"/>
<feature type="chain" id="PRO_0000202712" description="Uncharacterized protein YGL230C">
    <location>
        <begin position="1"/>
        <end position="147"/>
    </location>
</feature>
<feature type="transmembrane region" description="Helical" evidence="1">
    <location>
        <begin position="85"/>
        <end position="105"/>
    </location>
</feature>
<feature type="region of interest" description="Disordered" evidence="2">
    <location>
        <begin position="23"/>
        <end position="48"/>
    </location>
</feature>
<feature type="compositionally biased region" description="Polar residues" evidence="2">
    <location>
        <begin position="28"/>
        <end position="37"/>
    </location>
</feature>
<feature type="compositionally biased region" description="Basic and acidic residues" evidence="2">
    <location>
        <begin position="38"/>
        <end position="48"/>
    </location>
</feature>
<organism>
    <name type="scientific">Saccharomyces cerevisiae (strain ATCC 204508 / S288c)</name>
    <name type="common">Baker's yeast</name>
    <dbReference type="NCBI Taxonomy" id="559292"/>
    <lineage>
        <taxon>Eukaryota</taxon>
        <taxon>Fungi</taxon>
        <taxon>Dikarya</taxon>
        <taxon>Ascomycota</taxon>
        <taxon>Saccharomycotina</taxon>
        <taxon>Saccharomycetes</taxon>
        <taxon>Saccharomycetales</taxon>
        <taxon>Saccharomycetaceae</taxon>
        <taxon>Saccharomyces</taxon>
    </lineage>
</organism>
<gene>
    <name type="ordered locus">YGL230C</name>
</gene>
<evidence type="ECO:0000255" key="1"/>
<evidence type="ECO:0000256" key="2">
    <source>
        <dbReference type="SAM" id="MobiDB-lite"/>
    </source>
</evidence>
<evidence type="ECO:0000305" key="3"/>
<dbReference type="EMBL" id="Z72752">
    <property type="protein sequence ID" value="CAA96948.1"/>
    <property type="molecule type" value="Genomic_DNA"/>
</dbReference>
<dbReference type="EMBL" id="AY558544">
    <property type="protein sequence ID" value="AAS56870.1"/>
    <property type="molecule type" value="Genomic_DNA"/>
</dbReference>
<dbReference type="EMBL" id="BK006941">
    <property type="protein sequence ID" value="DAA07888.1"/>
    <property type="molecule type" value="Genomic_DNA"/>
</dbReference>
<dbReference type="PIR" id="S64252">
    <property type="entry name" value="S64252"/>
</dbReference>
<dbReference type="RefSeq" id="NP_011284.1">
    <property type="nucleotide sequence ID" value="NM_001181096.1"/>
</dbReference>
<dbReference type="SMR" id="P53074"/>
<dbReference type="BioGRID" id="33009">
    <property type="interactions" value="21"/>
</dbReference>
<dbReference type="DIP" id="DIP-1855N"/>
<dbReference type="FunCoup" id="P53074">
    <property type="interactions" value="38"/>
</dbReference>
<dbReference type="IntAct" id="P53074">
    <property type="interactions" value="4"/>
</dbReference>
<dbReference type="MINT" id="P53074"/>
<dbReference type="STRING" id="4932.YGL230C"/>
<dbReference type="PaxDb" id="4932-YGL230C"/>
<dbReference type="EnsemblFungi" id="YGL230C_mRNA">
    <property type="protein sequence ID" value="YGL230C"/>
    <property type="gene ID" value="YGL230C"/>
</dbReference>
<dbReference type="GeneID" id="852621"/>
<dbReference type="KEGG" id="sce:YGL230C"/>
<dbReference type="AGR" id="SGD:S000003199"/>
<dbReference type="SGD" id="S000003199">
    <property type="gene designation" value="YGL230C"/>
</dbReference>
<dbReference type="VEuPathDB" id="FungiDB:YGL230C"/>
<dbReference type="HOGENOM" id="CLU_1778532_0_0_1"/>
<dbReference type="InParanoid" id="P53074"/>
<dbReference type="OrthoDB" id="4041385at2759"/>
<dbReference type="BioCyc" id="YEAST:G3O-30704-MONOMER"/>
<dbReference type="BioGRID-ORCS" id="852621">
    <property type="hits" value="0 hits in 10 CRISPR screens"/>
</dbReference>
<dbReference type="PRO" id="PR:P53074"/>
<dbReference type="Proteomes" id="UP000002311">
    <property type="component" value="Chromosome VII"/>
</dbReference>
<dbReference type="RNAct" id="P53074">
    <property type="molecule type" value="protein"/>
</dbReference>
<dbReference type="GO" id="GO:0005783">
    <property type="term" value="C:endoplasmic reticulum"/>
    <property type="evidence" value="ECO:0007005"/>
    <property type="project" value="SGD"/>
</dbReference>
<dbReference type="GO" id="GO:0016020">
    <property type="term" value="C:membrane"/>
    <property type="evidence" value="ECO:0007669"/>
    <property type="project" value="UniProtKB-SubCell"/>
</dbReference>
<dbReference type="GO" id="GO:0005739">
    <property type="term" value="C:mitochondrion"/>
    <property type="evidence" value="ECO:0007005"/>
    <property type="project" value="SGD"/>
</dbReference>
<comment type="subcellular location">
    <subcellularLocation>
        <location evidence="3">Membrane</location>
        <topology evidence="3">Single-pass membrane protein</topology>
    </subcellularLocation>
</comment>
<sequence>MGIITLSGNVLHLLKAYPKKGLEEVSQPEPNTANDSSTEYKGKSKDDFQMVEKSNTDERYNFTRTKKWFLLMTSEYYKLMENRLLMFCIIACSFICAIQFLFFIIYWTNIVPRKTQRAITNLNYDYLTAHLKEQCVPYAKILDQCIL</sequence>